<organism>
    <name type="scientific">Rhizorhabdus wittichii (strain DSM 6014 / CCUG 31198 / JCM 15750 / NBRC 105917 / EY 4224 / RW1)</name>
    <name type="common">Sphingomonas wittichii</name>
    <dbReference type="NCBI Taxonomy" id="392499"/>
    <lineage>
        <taxon>Bacteria</taxon>
        <taxon>Pseudomonadati</taxon>
        <taxon>Pseudomonadota</taxon>
        <taxon>Alphaproteobacteria</taxon>
        <taxon>Sphingomonadales</taxon>
        <taxon>Sphingomonadaceae</taxon>
        <taxon>Rhizorhabdus</taxon>
    </lineage>
</organism>
<comment type="function">
    <text evidence="1">Binds directly to 23S ribosomal RNA and is necessary for the in vitro assembly process of the 50S ribosomal subunit. It is not involved in the protein synthesizing functions of that subunit.</text>
</comment>
<comment type="similarity">
    <text evidence="1">Belongs to the bacterial ribosomal protein bL20 family.</text>
</comment>
<name>RL20_RHIWR</name>
<proteinExistence type="inferred from homology"/>
<dbReference type="EMBL" id="CP000699">
    <property type="protein sequence ID" value="ABQ68790.1"/>
    <property type="molecule type" value="Genomic_DNA"/>
</dbReference>
<dbReference type="SMR" id="A5V924"/>
<dbReference type="STRING" id="392499.Swit_2431"/>
<dbReference type="PaxDb" id="392499-Swit_2431"/>
<dbReference type="KEGG" id="swi:Swit_2431"/>
<dbReference type="eggNOG" id="COG0292">
    <property type="taxonomic scope" value="Bacteria"/>
</dbReference>
<dbReference type="HOGENOM" id="CLU_123265_0_1_5"/>
<dbReference type="OrthoDB" id="9808966at2"/>
<dbReference type="Proteomes" id="UP000001989">
    <property type="component" value="Chromosome"/>
</dbReference>
<dbReference type="GO" id="GO:1990904">
    <property type="term" value="C:ribonucleoprotein complex"/>
    <property type="evidence" value="ECO:0007669"/>
    <property type="project" value="UniProtKB-KW"/>
</dbReference>
<dbReference type="GO" id="GO:0005840">
    <property type="term" value="C:ribosome"/>
    <property type="evidence" value="ECO:0007669"/>
    <property type="project" value="UniProtKB-KW"/>
</dbReference>
<dbReference type="GO" id="GO:0019843">
    <property type="term" value="F:rRNA binding"/>
    <property type="evidence" value="ECO:0007669"/>
    <property type="project" value="UniProtKB-UniRule"/>
</dbReference>
<dbReference type="GO" id="GO:0003735">
    <property type="term" value="F:structural constituent of ribosome"/>
    <property type="evidence" value="ECO:0007669"/>
    <property type="project" value="InterPro"/>
</dbReference>
<dbReference type="GO" id="GO:0000027">
    <property type="term" value="P:ribosomal large subunit assembly"/>
    <property type="evidence" value="ECO:0007669"/>
    <property type="project" value="UniProtKB-UniRule"/>
</dbReference>
<dbReference type="GO" id="GO:0006412">
    <property type="term" value="P:translation"/>
    <property type="evidence" value="ECO:0007669"/>
    <property type="project" value="InterPro"/>
</dbReference>
<dbReference type="CDD" id="cd07026">
    <property type="entry name" value="Ribosomal_L20"/>
    <property type="match status" value="1"/>
</dbReference>
<dbReference type="FunFam" id="1.10.1900.20:FF:000001">
    <property type="entry name" value="50S ribosomal protein L20"/>
    <property type="match status" value="1"/>
</dbReference>
<dbReference type="Gene3D" id="6.10.160.10">
    <property type="match status" value="1"/>
</dbReference>
<dbReference type="Gene3D" id="1.10.1900.20">
    <property type="entry name" value="Ribosomal protein L20"/>
    <property type="match status" value="1"/>
</dbReference>
<dbReference type="HAMAP" id="MF_00382">
    <property type="entry name" value="Ribosomal_bL20"/>
    <property type="match status" value="1"/>
</dbReference>
<dbReference type="InterPro" id="IPR005813">
    <property type="entry name" value="Ribosomal_bL20"/>
</dbReference>
<dbReference type="InterPro" id="IPR049946">
    <property type="entry name" value="RIBOSOMAL_L20_CS"/>
</dbReference>
<dbReference type="InterPro" id="IPR035566">
    <property type="entry name" value="Ribosomal_protein_bL20_C"/>
</dbReference>
<dbReference type="NCBIfam" id="TIGR01032">
    <property type="entry name" value="rplT_bact"/>
    <property type="match status" value="1"/>
</dbReference>
<dbReference type="PANTHER" id="PTHR10986">
    <property type="entry name" value="39S RIBOSOMAL PROTEIN L20"/>
    <property type="match status" value="1"/>
</dbReference>
<dbReference type="Pfam" id="PF00453">
    <property type="entry name" value="Ribosomal_L20"/>
    <property type="match status" value="1"/>
</dbReference>
<dbReference type="PRINTS" id="PR00062">
    <property type="entry name" value="RIBOSOMALL20"/>
</dbReference>
<dbReference type="SUPFAM" id="SSF74731">
    <property type="entry name" value="Ribosomal protein L20"/>
    <property type="match status" value="1"/>
</dbReference>
<dbReference type="PROSITE" id="PS00937">
    <property type="entry name" value="RIBOSOMAL_L20"/>
    <property type="match status" value="1"/>
</dbReference>
<sequence length="125" mass="13873">MARVKRGTTTHAKHKRILGAAKGYYGRRKNTIRIARQAVEKAGQYAYRDRKVKKRSFRALWIQRINAAVRAEGLTYGVFMHGLKLAGIELDRKVLADIAMHEGEAFSGIIAQAKAALPEGARIAA</sequence>
<gene>
    <name evidence="1" type="primary">rplT</name>
    <name type="ordered locus">Swit_2431</name>
</gene>
<evidence type="ECO:0000255" key="1">
    <source>
        <dbReference type="HAMAP-Rule" id="MF_00382"/>
    </source>
</evidence>
<evidence type="ECO:0000305" key="2"/>
<reference key="1">
    <citation type="journal article" date="2010" name="J. Bacteriol.">
        <title>Genome sequence of the dioxin-mineralizing bacterium Sphingomonas wittichii RW1.</title>
        <authorList>
            <person name="Miller T.R."/>
            <person name="Delcher A.L."/>
            <person name="Salzberg S.L."/>
            <person name="Saunders E."/>
            <person name="Detter J.C."/>
            <person name="Halden R.U."/>
        </authorList>
    </citation>
    <scope>NUCLEOTIDE SEQUENCE [LARGE SCALE GENOMIC DNA]</scope>
    <source>
        <strain>DSM 6014 / CCUG 31198 / JCM 15750 / NBRC 105917 / EY 4224 / RW1</strain>
    </source>
</reference>
<keyword id="KW-1185">Reference proteome</keyword>
<keyword id="KW-0687">Ribonucleoprotein</keyword>
<keyword id="KW-0689">Ribosomal protein</keyword>
<keyword id="KW-0694">RNA-binding</keyword>
<keyword id="KW-0699">rRNA-binding</keyword>
<accession>A5V924</accession>
<feature type="chain" id="PRO_1000049079" description="Large ribosomal subunit protein bL20">
    <location>
        <begin position="1"/>
        <end position="125"/>
    </location>
</feature>
<protein>
    <recommendedName>
        <fullName evidence="1">Large ribosomal subunit protein bL20</fullName>
    </recommendedName>
    <alternativeName>
        <fullName evidence="2">50S ribosomal protein L20</fullName>
    </alternativeName>
</protein>